<reference key="1">
    <citation type="journal article" date="2005" name="Mol. Biol. Evol.">
        <title>Analysis of Acorus calamus chloroplast genome and its phylogenetic implications.</title>
        <authorList>
            <person name="Goremykin V.V."/>
            <person name="Holland B."/>
            <person name="Hirsch-Ernst K.I."/>
            <person name="Hellwig F.H."/>
        </authorList>
    </citation>
    <scope>NUCLEOTIDE SEQUENCE [LARGE SCALE GENOMIC DNA]</scope>
</reference>
<protein>
    <recommendedName>
        <fullName evidence="2">Small ribosomal subunit protein uS12cz/uS12cy</fullName>
    </recommendedName>
    <alternativeName>
        <fullName evidence="3">30S ribosomal protein S12, chloroplastic</fullName>
    </alternativeName>
</protein>
<dbReference type="EMBL" id="AJ879453">
    <property type="protein sequence ID" value="CAI53817.1"/>
    <property type="molecule type" value="Genomic_DNA"/>
</dbReference>
<dbReference type="EMBL" id="AJ879453">
    <property type="protein sequence ID" value="CAI53818.1"/>
    <property type="molecule type" value="Genomic_DNA"/>
</dbReference>
<dbReference type="SMR" id="Q3V510"/>
<dbReference type="GO" id="GO:0009507">
    <property type="term" value="C:chloroplast"/>
    <property type="evidence" value="ECO:0007669"/>
    <property type="project" value="UniProtKB-SubCell"/>
</dbReference>
<dbReference type="GO" id="GO:0015935">
    <property type="term" value="C:small ribosomal subunit"/>
    <property type="evidence" value="ECO:0007669"/>
    <property type="project" value="InterPro"/>
</dbReference>
<dbReference type="GO" id="GO:0019843">
    <property type="term" value="F:rRNA binding"/>
    <property type="evidence" value="ECO:0007669"/>
    <property type="project" value="UniProtKB-UniRule"/>
</dbReference>
<dbReference type="GO" id="GO:0003735">
    <property type="term" value="F:structural constituent of ribosome"/>
    <property type="evidence" value="ECO:0007669"/>
    <property type="project" value="InterPro"/>
</dbReference>
<dbReference type="GO" id="GO:0006412">
    <property type="term" value="P:translation"/>
    <property type="evidence" value="ECO:0007669"/>
    <property type="project" value="UniProtKB-UniRule"/>
</dbReference>
<dbReference type="CDD" id="cd03368">
    <property type="entry name" value="Ribosomal_S12"/>
    <property type="match status" value="1"/>
</dbReference>
<dbReference type="FunFam" id="2.40.50.140:FF:000008">
    <property type="entry name" value="30S ribosomal protein S12, chloroplastic"/>
    <property type="match status" value="1"/>
</dbReference>
<dbReference type="Gene3D" id="2.40.50.140">
    <property type="entry name" value="Nucleic acid-binding proteins"/>
    <property type="match status" value="1"/>
</dbReference>
<dbReference type="HAMAP" id="MF_00403_B">
    <property type="entry name" value="Ribosomal_uS12_B"/>
    <property type="match status" value="1"/>
</dbReference>
<dbReference type="InterPro" id="IPR012340">
    <property type="entry name" value="NA-bd_OB-fold"/>
</dbReference>
<dbReference type="InterPro" id="IPR006032">
    <property type="entry name" value="Ribosomal_uS12"/>
</dbReference>
<dbReference type="InterPro" id="IPR005679">
    <property type="entry name" value="Ribosomal_uS12_bac"/>
</dbReference>
<dbReference type="NCBIfam" id="TIGR00981">
    <property type="entry name" value="rpsL_bact"/>
    <property type="match status" value="1"/>
</dbReference>
<dbReference type="PANTHER" id="PTHR11652">
    <property type="entry name" value="30S RIBOSOMAL PROTEIN S12 FAMILY MEMBER"/>
    <property type="match status" value="1"/>
</dbReference>
<dbReference type="Pfam" id="PF00164">
    <property type="entry name" value="Ribosom_S12_S23"/>
    <property type="match status" value="1"/>
</dbReference>
<dbReference type="PIRSF" id="PIRSF002133">
    <property type="entry name" value="Ribosomal_S12/S23"/>
    <property type="match status" value="1"/>
</dbReference>
<dbReference type="PRINTS" id="PR01034">
    <property type="entry name" value="RIBOSOMALS12"/>
</dbReference>
<dbReference type="SUPFAM" id="SSF50249">
    <property type="entry name" value="Nucleic acid-binding proteins"/>
    <property type="match status" value="1"/>
</dbReference>
<dbReference type="PROSITE" id="PS00055">
    <property type="entry name" value="RIBOSOMAL_S12"/>
    <property type="match status" value="1"/>
</dbReference>
<feature type="chain" id="PRO_0000296058" description="Small ribosomal subunit protein uS12cz/uS12cy">
    <location>
        <begin position="1"/>
        <end position="123"/>
    </location>
</feature>
<comment type="function">
    <text evidence="1">With S4 and S5 plays an important role in translational accuracy. Located at the interface of the 30S and 50S subunits (By similarity).</text>
</comment>
<comment type="subunit">
    <text evidence="1">Part of the 30S ribosomal subunit.</text>
</comment>
<comment type="subcellular location">
    <subcellularLocation>
        <location>Plastid</location>
        <location>Chloroplast</location>
    </subcellularLocation>
</comment>
<comment type="similarity">
    <text evidence="3">Belongs to the universal ribosomal protein uS12 family.</text>
</comment>
<accession>Q3V510</accession>
<evidence type="ECO:0000250" key="1"/>
<evidence type="ECO:0000255" key="2">
    <source>
        <dbReference type="HAMAP-Rule" id="MF_00403"/>
    </source>
</evidence>
<evidence type="ECO:0000305" key="3"/>
<proteinExistence type="inferred from homology"/>
<geneLocation type="chloroplast"/>
<gene>
    <name type="primary">rps12-A</name>
</gene>
<gene>
    <name type="primary">rps12-B</name>
</gene>
<keyword id="KW-0150">Chloroplast</keyword>
<keyword id="KW-0934">Plastid</keyword>
<keyword id="KW-0687">Ribonucleoprotein</keyword>
<keyword id="KW-0689">Ribosomal protein</keyword>
<keyword id="KW-0694">RNA-binding</keyword>
<keyword id="KW-0699">rRNA-binding</keyword>
<organism>
    <name type="scientific">Acorus calamus</name>
    <name type="common">Sweet flag</name>
    <dbReference type="NCBI Taxonomy" id="4465"/>
    <lineage>
        <taxon>Eukaryota</taxon>
        <taxon>Viridiplantae</taxon>
        <taxon>Streptophyta</taxon>
        <taxon>Embryophyta</taxon>
        <taxon>Tracheophyta</taxon>
        <taxon>Spermatophyta</taxon>
        <taxon>Magnoliopsida</taxon>
        <taxon>Liliopsida</taxon>
        <taxon>Acoraceae</taxon>
        <taxon>Acorus</taxon>
    </lineage>
</organism>
<name>RR12_ACOCL</name>
<sequence length="123" mass="13764">MPTIKQLIRNTRQPIRNVTKSPALRGCPQRRGTCTRVYTITPKKPNSALRKVARVRLTSGFEITAYIPGIGHNLQEHSVVLVRGGRVKDLPGVRYHIVRGTLDAVGVKDRQQGRSKYGVKKPK</sequence>